<name>MBK1_CAEEL</name>
<reference evidence="10 11" key="1">
    <citation type="journal article" date="2003" name="Genetics">
        <title>Characterization of Caenorhabditis elegans homologs of the Down syndrome candidate gene DYRK1A.</title>
        <authorList>
            <person name="Raich W.B."/>
            <person name="Moorman C."/>
            <person name="Lacefield C.O."/>
            <person name="Lehrer J."/>
            <person name="Bartsch D."/>
            <person name="Plasterk R.H."/>
            <person name="Kandel E.R."/>
            <person name="Hobert O."/>
        </authorList>
    </citation>
    <scope>NUCLEOTIDE SEQUENCE [MRNA]</scope>
    <scope>FUNCTION</scope>
    <scope>SUBCELLULAR LOCATION</scope>
    <scope>TISSUE SPECIFICITY</scope>
    <scope>DEVELOPMENTAL STAGE</scope>
    <scope>DISRUPTION PHENOTYPE</scope>
</reference>
<reference evidence="12" key="2">
    <citation type="journal article" date="1998" name="Science">
        <title>Genome sequence of the nematode C. elegans: a platform for investigating biology.</title>
        <authorList>
            <consortium name="The C. elegans sequencing consortium"/>
        </authorList>
    </citation>
    <scope>NUCLEOTIDE SEQUENCE [LARGE SCALE GENOMIC DNA]</scope>
    <source>
        <strain evidence="12">Bristol N2</strain>
    </source>
</reference>
<protein>
    <recommendedName>
        <fullName evidence="3">Dual specificity tyrosine-phosphorylation-regulated kinase mbk-1</fullName>
        <ecNumber evidence="9">2.7.12.1</ecNumber>
    </recommendedName>
    <alternativeName>
        <fullName evidence="3 11">Dual specificity Yak1-related kinase mbk-1</fullName>
    </alternativeName>
    <alternativeName>
        <fullName evidence="4">Minibrain Kinase 1</fullName>
    </alternativeName>
</protein>
<organism>
    <name type="scientific">Caenorhabditis elegans</name>
    <dbReference type="NCBI Taxonomy" id="6239"/>
    <lineage>
        <taxon>Eukaryota</taxon>
        <taxon>Metazoa</taxon>
        <taxon>Ecdysozoa</taxon>
        <taxon>Nematoda</taxon>
        <taxon>Chromadorea</taxon>
        <taxon>Rhabditida</taxon>
        <taxon>Rhabditina</taxon>
        <taxon>Rhabditomorpha</taxon>
        <taxon>Rhabditoidea</taxon>
        <taxon>Rhabditidae</taxon>
        <taxon>Peloderinae</taxon>
        <taxon>Caenorhabditis</taxon>
    </lineage>
</organism>
<sequence>MNTADVPDNLQSWGQQPSSSYSNTQQHSQMTNLPPINHNNLCDTEPMNEDFQLQDVQADELQKQQKQQEQQHIQQQNAQRFIAQSRQPHSNILRFPQPPITSIKTNSHAFYPQQEVTQVRPKKHRVSMTNAEAALTPGMPPEKQAAKKRNIGQFSTDTVPAGIGMIGIPFESTSKPLQIQQFRNPQDAPVRKLTSDLIKTYKAINESFYLRKQVRRDRHKSQDAGKPKGSKDGSGASLTDTFSIHNAIPITSSDNHYQQDAHQNAPPLLDTNAPPTSTMVVPMRTETDLQQQQRQKSSRGGPYNNGYDDQNYDYILKNGEIFDKRYVILSDTPVGKGSFGQVTKAYDTLNKEEVAIKIIKNKKTFFDQAQIEIHLLELTNAHDKDNKYNIVTLKGHFVHRAHLCLVFELLSYNLYDLLKNTSFRGVSLNLARKFAQQLGKTLLFLSSPELSIIHCDLKPENVLLVNAKRSQIRVIDFGSSCQTGHRIYQYIQSRFYRSPEVLLGIAYDTKIDMWSLGCILVEMHTGEPLFAGSSEVDQMMKIVEVLGMPPKEMLDIGPKTHKYFDKTEDGIYYCKKTRDGYRHTYKAPGARKLHEILGVTSGGPGGRRLGEPGHSVEDYSKFKDLIKRMLQFDPKQRISPYYVVRHPFLKQKEERVPSQPPVSHSNLQQQQQLYIQQPSSQMSQVMESPSVGSVYVEDNGMYRQAPGSSANPISVTSSFDEGDAMEVDAGRRRFSAHQQNYHNPNYQYSQPQQQQQQQYQQTQRTQLEQQQKQAQLQQQLQQQQMQQQQQQQQQRQHMPQAQSSSQQHLQSRARPRQQDQNEWRNQFELDDTFQQKQRKVDDSVSNQISRNQFNPQQVSMTHGNVNANNREMEKLDYPNNKL</sequence>
<dbReference type="EC" id="2.7.12.1" evidence="9"/>
<dbReference type="EMBL" id="AY064464">
    <property type="protein sequence ID" value="AAL40874.1"/>
    <property type="molecule type" value="mRNA"/>
</dbReference>
<dbReference type="EMBL" id="Z69885">
    <property type="protein sequence ID" value="CAA93756.2"/>
    <property type="molecule type" value="Genomic_DNA"/>
</dbReference>
<dbReference type="PIR" id="T24445">
    <property type="entry name" value="T24445"/>
</dbReference>
<dbReference type="RefSeq" id="NP_510460.2">
    <property type="nucleotide sequence ID" value="NM_078059.4"/>
</dbReference>
<dbReference type="SMR" id="Q8WQL7"/>
<dbReference type="BioGRID" id="46475">
    <property type="interactions" value="139"/>
</dbReference>
<dbReference type="FunCoup" id="Q8WQL7">
    <property type="interactions" value="2487"/>
</dbReference>
<dbReference type="IntAct" id="Q8WQL7">
    <property type="interactions" value="3"/>
</dbReference>
<dbReference type="MINT" id="Q8WQL7"/>
<dbReference type="STRING" id="6239.T04C10.1.1"/>
<dbReference type="PaxDb" id="6239-T04C10.1"/>
<dbReference type="PeptideAtlas" id="Q8WQL7"/>
<dbReference type="EnsemblMetazoa" id="T04C10.1.1">
    <property type="protein sequence ID" value="T04C10.1.1"/>
    <property type="gene ID" value="WBGene00003149"/>
</dbReference>
<dbReference type="GeneID" id="181578"/>
<dbReference type="KEGG" id="cel:CELE_T04C10.1"/>
<dbReference type="UCSC" id="T04C10.1">
    <property type="organism name" value="c. elegans"/>
</dbReference>
<dbReference type="AGR" id="WB:WBGene00003149"/>
<dbReference type="CTD" id="181578"/>
<dbReference type="WormBase" id="T04C10.1">
    <property type="protein sequence ID" value="CE33442"/>
    <property type="gene ID" value="WBGene00003149"/>
    <property type="gene designation" value="mbk-1"/>
</dbReference>
<dbReference type="eggNOG" id="KOG0667">
    <property type="taxonomic scope" value="Eukaryota"/>
</dbReference>
<dbReference type="GeneTree" id="ENSGT00940000170191"/>
<dbReference type="HOGENOM" id="CLU_014959_0_0_1"/>
<dbReference type="InParanoid" id="Q8WQL7"/>
<dbReference type="OMA" id="DGIYYCK"/>
<dbReference type="OrthoDB" id="9332038at2759"/>
<dbReference type="PhylomeDB" id="Q8WQL7"/>
<dbReference type="Reactome" id="R-CEL-1538133">
    <property type="pathway name" value="G0 and Early G1"/>
</dbReference>
<dbReference type="PRO" id="PR:Q8WQL7"/>
<dbReference type="Proteomes" id="UP000001940">
    <property type="component" value="Chromosome X"/>
</dbReference>
<dbReference type="Bgee" id="WBGene00003149">
    <property type="expression patterns" value="Expressed in pharyngeal muscle cell (C elegans) and 4 other cell types or tissues"/>
</dbReference>
<dbReference type="GO" id="GO:0005634">
    <property type="term" value="C:nucleus"/>
    <property type="evidence" value="ECO:0000318"/>
    <property type="project" value="GO_Central"/>
</dbReference>
<dbReference type="GO" id="GO:0005524">
    <property type="term" value="F:ATP binding"/>
    <property type="evidence" value="ECO:0007669"/>
    <property type="project" value="UniProtKB-KW"/>
</dbReference>
<dbReference type="GO" id="GO:0106310">
    <property type="term" value="F:protein serine kinase activity"/>
    <property type="evidence" value="ECO:0007669"/>
    <property type="project" value="RHEA"/>
</dbReference>
<dbReference type="GO" id="GO:0004674">
    <property type="term" value="F:protein serine/threonine kinase activity"/>
    <property type="evidence" value="ECO:0000318"/>
    <property type="project" value="GO_Central"/>
</dbReference>
<dbReference type="GO" id="GO:0004712">
    <property type="term" value="F:protein serine/threonine/tyrosine kinase activity"/>
    <property type="evidence" value="ECO:0007669"/>
    <property type="project" value="UniProtKB-EC"/>
</dbReference>
<dbReference type="GO" id="GO:0004713">
    <property type="term" value="F:protein tyrosine kinase activity"/>
    <property type="evidence" value="ECO:0007669"/>
    <property type="project" value="UniProtKB-KW"/>
</dbReference>
<dbReference type="GO" id="GO:0003713">
    <property type="term" value="F:transcription coactivator activity"/>
    <property type="evidence" value="ECO:0000318"/>
    <property type="project" value="GO_Central"/>
</dbReference>
<dbReference type="GO" id="GO:0045893">
    <property type="term" value="P:positive regulation of DNA-templated transcription"/>
    <property type="evidence" value="ECO:0000318"/>
    <property type="project" value="GO_Central"/>
</dbReference>
<dbReference type="GO" id="GO:0007608">
    <property type="term" value="P:sensory perception of smell"/>
    <property type="evidence" value="ECO:0007669"/>
    <property type="project" value="UniProtKB-KW"/>
</dbReference>
<dbReference type="CDD" id="cd14226">
    <property type="entry name" value="PKc_DYRK1"/>
    <property type="match status" value="1"/>
</dbReference>
<dbReference type="FunFam" id="3.30.200.20:FF:000087">
    <property type="entry name" value="Dual specificity tyrosine-phosphorylation-regulated kinase 1A"/>
    <property type="match status" value="1"/>
</dbReference>
<dbReference type="FunFam" id="1.10.510.10:FF:000117">
    <property type="entry name" value="dual specificity tyrosine-phosphorylation-regulated kinase 1A isoform X1"/>
    <property type="match status" value="1"/>
</dbReference>
<dbReference type="Gene3D" id="3.30.200.20">
    <property type="entry name" value="Phosphorylase Kinase, domain 1"/>
    <property type="match status" value="1"/>
</dbReference>
<dbReference type="Gene3D" id="1.10.510.10">
    <property type="entry name" value="Transferase(Phosphotransferase) domain 1"/>
    <property type="match status" value="1"/>
</dbReference>
<dbReference type="InterPro" id="IPR011009">
    <property type="entry name" value="Kinase-like_dom_sf"/>
</dbReference>
<dbReference type="InterPro" id="IPR044131">
    <property type="entry name" value="PKc_DYR1A/1B"/>
</dbReference>
<dbReference type="InterPro" id="IPR000719">
    <property type="entry name" value="Prot_kinase_dom"/>
</dbReference>
<dbReference type="InterPro" id="IPR017441">
    <property type="entry name" value="Protein_kinase_ATP_BS"/>
</dbReference>
<dbReference type="InterPro" id="IPR008271">
    <property type="entry name" value="Ser/Thr_kinase_AS"/>
</dbReference>
<dbReference type="InterPro" id="IPR050494">
    <property type="entry name" value="Ser_Thr_dual-spec_kinase"/>
</dbReference>
<dbReference type="PANTHER" id="PTHR24058">
    <property type="entry name" value="DUAL SPECIFICITY PROTEIN KINASE"/>
    <property type="match status" value="1"/>
</dbReference>
<dbReference type="PANTHER" id="PTHR24058:SF28">
    <property type="entry name" value="SERINE_THREONINE-PROTEIN KINASE MINIBRAIN"/>
    <property type="match status" value="1"/>
</dbReference>
<dbReference type="Pfam" id="PF00069">
    <property type="entry name" value="Pkinase"/>
    <property type="match status" value="1"/>
</dbReference>
<dbReference type="SMART" id="SM00220">
    <property type="entry name" value="S_TKc"/>
    <property type="match status" value="1"/>
</dbReference>
<dbReference type="SUPFAM" id="SSF56112">
    <property type="entry name" value="Protein kinase-like (PK-like)"/>
    <property type="match status" value="1"/>
</dbReference>
<dbReference type="PROSITE" id="PS00107">
    <property type="entry name" value="PROTEIN_KINASE_ATP"/>
    <property type="match status" value="1"/>
</dbReference>
<dbReference type="PROSITE" id="PS50011">
    <property type="entry name" value="PROTEIN_KINASE_DOM"/>
    <property type="match status" value="1"/>
</dbReference>
<dbReference type="PROSITE" id="PS00108">
    <property type="entry name" value="PROTEIN_KINASE_ST"/>
    <property type="match status" value="1"/>
</dbReference>
<feature type="chain" id="PRO_0000390715" description="Dual specificity tyrosine-phosphorylation-regulated kinase mbk-1">
    <location>
        <begin position="1"/>
        <end position="882"/>
    </location>
</feature>
<feature type="domain" description="Protein kinase" evidence="6">
    <location>
        <begin position="328"/>
        <end position="649"/>
    </location>
</feature>
<feature type="region of interest" description="Disordered" evidence="8">
    <location>
        <begin position="1"/>
        <end position="45"/>
    </location>
</feature>
<feature type="region of interest" description="Disordered" evidence="8">
    <location>
        <begin position="62"/>
        <end position="81"/>
    </location>
</feature>
<feature type="region of interest" description="Disordered" evidence="8">
    <location>
        <begin position="212"/>
        <end position="239"/>
    </location>
</feature>
<feature type="region of interest" description="Disordered" evidence="8">
    <location>
        <begin position="255"/>
        <end position="308"/>
    </location>
</feature>
<feature type="region of interest" description="Disordered" evidence="8">
    <location>
        <begin position="742"/>
        <end position="761"/>
    </location>
</feature>
<feature type="region of interest" description="Disordered" evidence="8">
    <location>
        <begin position="789"/>
        <end position="882"/>
    </location>
</feature>
<feature type="compositionally biased region" description="Polar residues" evidence="8">
    <location>
        <begin position="1"/>
        <end position="42"/>
    </location>
</feature>
<feature type="compositionally biased region" description="Low complexity" evidence="8">
    <location>
        <begin position="64"/>
        <end position="79"/>
    </location>
</feature>
<feature type="compositionally biased region" description="Basic and acidic residues" evidence="8">
    <location>
        <begin position="220"/>
        <end position="231"/>
    </location>
</feature>
<feature type="compositionally biased region" description="Low complexity" evidence="8">
    <location>
        <begin position="290"/>
        <end position="308"/>
    </location>
</feature>
<feature type="compositionally biased region" description="Low complexity" evidence="8">
    <location>
        <begin position="747"/>
        <end position="761"/>
    </location>
</feature>
<feature type="compositionally biased region" description="Low complexity" evidence="8">
    <location>
        <begin position="789"/>
        <end position="810"/>
    </location>
</feature>
<feature type="compositionally biased region" description="Basic and acidic residues" evidence="8">
    <location>
        <begin position="816"/>
        <end position="827"/>
    </location>
</feature>
<feature type="compositionally biased region" description="Polar residues" evidence="8">
    <location>
        <begin position="843"/>
        <end position="869"/>
    </location>
</feature>
<feature type="active site" description="Proton acceptor" evidence="2 6 7">
    <location>
        <position position="456"/>
    </location>
</feature>
<feature type="binding site" evidence="2 6">
    <location>
        <begin position="334"/>
        <end position="342"/>
    </location>
    <ligand>
        <name>ATP</name>
        <dbReference type="ChEBI" id="CHEBI:30616"/>
    </ligand>
</feature>
<feature type="binding site" evidence="4 6">
    <location>
        <position position="357"/>
    </location>
    <ligand>
        <name>ATP</name>
        <dbReference type="ChEBI" id="CHEBI:30616"/>
    </ligand>
</feature>
<proteinExistence type="evidence at protein level"/>
<evidence type="ECO:0000250" key="1"/>
<evidence type="ECO:0000250" key="2">
    <source>
        <dbReference type="UniProtKB" id="P28523"/>
    </source>
</evidence>
<evidence type="ECO:0000250" key="3">
    <source>
        <dbReference type="UniProtKB" id="Q13627"/>
    </source>
</evidence>
<evidence type="ECO:0000250" key="4">
    <source>
        <dbReference type="UniProtKB" id="Q9XTF3"/>
    </source>
</evidence>
<evidence type="ECO:0000255" key="5"/>
<evidence type="ECO:0000255" key="6">
    <source>
        <dbReference type="PROSITE-ProRule" id="PRU00159"/>
    </source>
</evidence>
<evidence type="ECO:0000255" key="7">
    <source>
        <dbReference type="PROSITE-ProRule" id="PRU10027"/>
    </source>
</evidence>
<evidence type="ECO:0000256" key="8">
    <source>
        <dbReference type="SAM" id="MobiDB-lite"/>
    </source>
</evidence>
<evidence type="ECO:0000269" key="9">
    <source>
    </source>
</evidence>
<evidence type="ECO:0000305" key="10"/>
<evidence type="ECO:0000312" key="11">
    <source>
        <dbReference type="EMBL" id="AAL40874.1"/>
    </source>
</evidence>
<evidence type="ECO:0000312" key="12">
    <source>
        <dbReference type="EMBL" id="CAA93756.2"/>
    </source>
</evidence>
<evidence type="ECO:0000312" key="13">
    <source>
        <dbReference type="WormBase" id="T04C10.1"/>
    </source>
</evidence>
<gene>
    <name evidence="11 13" type="primary">mbk-1</name>
    <name type="ORF">T04C10.1</name>
</gene>
<comment type="function">
    <text evidence="9">Possible role in the function of olfactory neurons.</text>
</comment>
<comment type="catalytic activity">
    <reaction evidence="9">
        <text>L-seryl-[protein] + ATP = O-phospho-L-seryl-[protein] + ADP + H(+)</text>
        <dbReference type="Rhea" id="RHEA:17989"/>
        <dbReference type="Rhea" id="RHEA-COMP:9863"/>
        <dbReference type="Rhea" id="RHEA-COMP:11604"/>
        <dbReference type="ChEBI" id="CHEBI:15378"/>
        <dbReference type="ChEBI" id="CHEBI:29999"/>
        <dbReference type="ChEBI" id="CHEBI:30616"/>
        <dbReference type="ChEBI" id="CHEBI:83421"/>
        <dbReference type="ChEBI" id="CHEBI:456216"/>
        <dbReference type="EC" id="2.7.12.1"/>
    </reaction>
</comment>
<comment type="catalytic activity">
    <reaction evidence="9">
        <text>L-threonyl-[protein] + ATP = O-phospho-L-threonyl-[protein] + ADP + H(+)</text>
        <dbReference type="Rhea" id="RHEA:46608"/>
        <dbReference type="Rhea" id="RHEA-COMP:11060"/>
        <dbReference type="Rhea" id="RHEA-COMP:11605"/>
        <dbReference type="ChEBI" id="CHEBI:15378"/>
        <dbReference type="ChEBI" id="CHEBI:30013"/>
        <dbReference type="ChEBI" id="CHEBI:30616"/>
        <dbReference type="ChEBI" id="CHEBI:61977"/>
        <dbReference type="ChEBI" id="CHEBI:456216"/>
        <dbReference type="EC" id="2.7.12.1"/>
    </reaction>
</comment>
<comment type="catalytic activity">
    <reaction evidence="9">
        <text>L-tyrosyl-[protein] + ATP = O-phospho-L-tyrosyl-[protein] + ADP + H(+)</text>
        <dbReference type="Rhea" id="RHEA:10596"/>
        <dbReference type="Rhea" id="RHEA-COMP:10136"/>
        <dbReference type="Rhea" id="RHEA-COMP:20101"/>
        <dbReference type="ChEBI" id="CHEBI:15378"/>
        <dbReference type="ChEBI" id="CHEBI:30616"/>
        <dbReference type="ChEBI" id="CHEBI:46858"/>
        <dbReference type="ChEBI" id="CHEBI:61978"/>
        <dbReference type="ChEBI" id="CHEBI:456216"/>
        <dbReference type="EC" id="2.7.12.1"/>
    </reaction>
</comment>
<comment type="cofactor">
    <cofactor evidence="1 9">
        <name>Mg(2+)</name>
        <dbReference type="ChEBI" id="CHEBI:18420"/>
    </cofactor>
</comment>
<comment type="interaction">
    <interactant intactId="EBI-329013">
        <id>Q8WQL7</id>
    </interactant>
    <interactant intactId="EBI-2315822">
        <id>Q7K7J0</id>
        <label>gei-18</label>
    </interactant>
    <organismsDiffer>false</organismsDiffer>
    <experiments>3</experiments>
</comment>
<comment type="subcellular location">
    <subcellularLocation>
        <location evidence="9">Nucleus</location>
    </subcellularLocation>
</comment>
<comment type="tissue specificity">
    <text evidence="9">Expressed in all somatic cells.</text>
</comment>
<comment type="developmental stage">
    <text evidence="9">First observed during early cell morphogenesis in the embryo, levels increase during later embryonic development and remain at comparable levels throughout larval and adult stages.</text>
</comment>
<comment type="disruption phenotype">
    <text evidence="9">No visible phenotype.</text>
</comment>
<comment type="similarity">
    <text evidence="5">Belongs to the protein kinase superfamily. CMGC Ser/Thr protein kinase family. MNB/DYRK subfamily.</text>
</comment>
<accession>Q8WQL7</accession>
<accession>Q22155</accession>
<keyword id="KW-0067">ATP-binding</keyword>
<keyword id="KW-0418">Kinase</keyword>
<keyword id="KW-0460">Magnesium</keyword>
<keyword id="KW-0547">Nucleotide-binding</keyword>
<keyword id="KW-0539">Nucleus</keyword>
<keyword id="KW-0552">Olfaction</keyword>
<keyword id="KW-1185">Reference proteome</keyword>
<keyword id="KW-0716">Sensory transduction</keyword>
<keyword id="KW-0723">Serine/threonine-protein kinase</keyword>
<keyword id="KW-0808">Transferase</keyword>
<keyword id="KW-0829">Tyrosine-protein kinase</keyword>